<accession>Q3SB06</accession>
<accession>Q2XXP9</accession>
<protein>
    <recommendedName>
        <fullName>Cysteine-rich venom protein pseudechetoxin-like</fullName>
        <shortName>CRVP</shortName>
    </recommendedName>
    <alternativeName>
        <fullName>Cysteine-rich secretory protein OXY1</fullName>
        <shortName>CRISP-OXY1</shortName>
    </alternativeName>
</protein>
<proteinExistence type="evidence at transcript level"/>
<keyword id="KW-1015">Disulfide bond</keyword>
<keyword id="KW-0872">Ion channel impairing toxin</keyword>
<keyword id="KW-0528">Neurotoxin</keyword>
<keyword id="KW-0964">Secreted</keyword>
<keyword id="KW-0732">Signal</keyword>
<keyword id="KW-0800">Toxin</keyword>
<reference key="1">
    <citation type="journal article" date="2005" name="Cell. Mol. Life Sci.">
        <title>Identification and analysis of venom gland-specific genes from the coastal taipan (Oxyuranus scutellatus) and related species.</title>
        <authorList>
            <person name="St Pierre L."/>
            <person name="Woods R."/>
            <person name="Earl S.T.H."/>
            <person name="Masci P.P."/>
            <person name="Lavin M.F."/>
        </authorList>
    </citation>
    <scope>NUCLEOTIDE SEQUENCE [MRNA]</scope>
    <source>
        <tissue>Venom gland</tissue>
    </source>
</reference>
<reference key="2">
    <citation type="journal article" date="2006" name="Nature">
        <title>Early evolution of the venom system in lizards and snakes.</title>
        <authorList>
            <person name="Fry B.G."/>
            <person name="Vidal N."/>
            <person name="Norman J.A."/>
            <person name="Vonk F.J."/>
            <person name="Scheib H."/>
            <person name="Ramjan S.F.R."/>
            <person name="Kuruppu S."/>
            <person name="Fung K."/>
            <person name="Blair Hedges S."/>
            <person name="Richardson M.K."/>
            <person name="Hodgson W.C."/>
            <person name="Ignjatovic V."/>
            <person name="Summerhayes R."/>
            <person name="Kochva E."/>
        </authorList>
    </citation>
    <scope>NUCLEOTIDE SEQUENCE [LARGE SCALE MRNA]</scope>
    <source>
        <tissue>Venom gland</tissue>
    </source>
</reference>
<dbReference type="EMBL" id="DQ084036">
    <property type="protein sequence ID" value="AAZ38981.1"/>
    <property type="molecule type" value="mRNA"/>
</dbReference>
<dbReference type="EMBL" id="DQ139896">
    <property type="protein sequence ID" value="AAZ75602.1"/>
    <property type="molecule type" value="mRNA"/>
</dbReference>
<dbReference type="SMR" id="Q3SB06"/>
<dbReference type="GO" id="GO:0005576">
    <property type="term" value="C:extracellular region"/>
    <property type="evidence" value="ECO:0007669"/>
    <property type="project" value="UniProtKB-SubCell"/>
</dbReference>
<dbReference type="GO" id="GO:0099106">
    <property type="term" value="F:ion channel regulator activity"/>
    <property type="evidence" value="ECO:0007669"/>
    <property type="project" value="UniProtKB-KW"/>
</dbReference>
<dbReference type="GO" id="GO:0090729">
    <property type="term" value="F:toxin activity"/>
    <property type="evidence" value="ECO:0007669"/>
    <property type="project" value="UniProtKB-KW"/>
</dbReference>
<dbReference type="CDD" id="cd05383">
    <property type="entry name" value="CAP_CRISP"/>
    <property type="match status" value="1"/>
</dbReference>
<dbReference type="FunFam" id="1.10.10.740:FF:000001">
    <property type="entry name" value="Cysteine-rich secretory protein 2"/>
    <property type="match status" value="1"/>
</dbReference>
<dbReference type="FunFam" id="3.40.33.10:FF:000005">
    <property type="entry name" value="Cysteine-rich secretory protein 2"/>
    <property type="match status" value="1"/>
</dbReference>
<dbReference type="Gene3D" id="3.40.33.10">
    <property type="entry name" value="CAP"/>
    <property type="match status" value="1"/>
</dbReference>
<dbReference type="Gene3D" id="1.10.10.740">
    <property type="entry name" value="Crisp domain"/>
    <property type="match status" value="1"/>
</dbReference>
<dbReference type="InterPro" id="IPR018244">
    <property type="entry name" value="Allrgn_V5/Tpx1_CS"/>
</dbReference>
<dbReference type="InterPro" id="IPR014044">
    <property type="entry name" value="CAP_dom"/>
</dbReference>
<dbReference type="InterPro" id="IPR035940">
    <property type="entry name" value="CAP_sf"/>
</dbReference>
<dbReference type="InterPro" id="IPR042076">
    <property type="entry name" value="Crisp-like_dom"/>
</dbReference>
<dbReference type="InterPro" id="IPR001283">
    <property type="entry name" value="CRISP-related"/>
</dbReference>
<dbReference type="InterPro" id="IPR013871">
    <property type="entry name" value="Cysteine_rich_secretory"/>
</dbReference>
<dbReference type="InterPro" id="IPR034117">
    <property type="entry name" value="SCP_CRISP"/>
</dbReference>
<dbReference type="InterPro" id="IPR003582">
    <property type="entry name" value="ShKT_dom"/>
</dbReference>
<dbReference type="PANTHER" id="PTHR10334">
    <property type="entry name" value="CYSTEINE-RICH SECRETORY PROTEIN-RELATED"/>
    <property type="match status" value="1"/>
</dbReference>
<dbReference type="Pfam" id="PF00188">
    <property type="entry name" value="CAP"/>
    <property type="match status" value="1"/>
</dbReference>
<dbReference type="Pfam" id="PF08562">
    <property type="entry name" value="Crisp"/>
    <property type="match status" value="1"/>
</dbReference>
<dbReference type="PRINTS" id="PR00837">
    <property type="entry name" value="V5TPXLIKE"/>
</dbReference>
<dbReference type="SMART" id="SM00198">
    <property type="entry name" value="SCP"/>
    <property type="match status" value="1"/>
</dbReference>
<dbReference type="SUPFAM" id="SSF57546">
    <property type="entry name" value="Crisp domain-like"/>
    <property type="match status" value="1"/>
</dbReference>
<dbReference type="SUPFAM" id="SSF55797">
    <property type="entry name" value="PR-1-like"/>
    <property type="match status" value="1"/>
</dbReference>
<dbReference type="PROSITE" id="PS01009">
    <property type="entry name" value="CRISP_1"/>
    <property type="match status" value="1"/>
</dbReference>
<dbReference type="PROSITE" id="PS01010">
    <property type="entry name" value="CRISP_2"/>
    <property type="match status" value="1"/>
</dbReference>
<dbReference type="PROSITE" id="PS51670">
    <property type="entry name" value="SHKT"/>
    <property type="match status" value="1"/>
</dbReference>
<name>CRVP_OXYMI</name>
<sequence length="238" mass="26415">MIAFIVLLSLAAVLQQSSGTVDFASESSNKKDYRKEIVDKHNDLRRSVKPTARNMLQMKWNSRAAQNAKRWANRCTFAHSPPYTRTVGKLRCGENIFMSSQPFAWSGVVQAWYDEVKKFVYGIGAKPPSSVIGHYTQVVWYKSHLLGCASAKCSSTKYLYVCQYCPAGNIIGSIATPYKSGPPCGDCPSACDNGLCTNPCKHNDDLSNCKPLAKKSKCQTEWIKSKCPATCFCRTEII</sequence>
<comment type="function">
    <text evidence="1">Blocks olfactory (CNGA2) and retinal (CNGA1) CNG channel currents. Does not affect neither depolarization- nor caffeine-induced contraction of smooth muscle (By similarity).</text>
</comment>
<comment type="subcellular location">
    <subcellularLocation>
        <location evidence="1">Secreted</location>
    </subcellularLocation>
</comment>
<comment type="tissue specificity">
    <text>Expressed by the venom gland.</text>
</comment>
<comment type="similarity">
    <text evidence="3">Belongs to the CRISP family.</text>
</comment>
<organism>
    <name type="scientific">Oxyuranus microlepidotus</name>
    <name type="common">Inland taipan</name>
    <name type="synonym">Diemenia microlepidota</name>
    <dbReference type="NCBI Taxonomy" id="111177"/>
    <lineage>
        <taxon>Eukaryota</taxon>
        <taxon>Metazoa</taxon>
        <taxon>Chordata</taxon>
        <taxon>Craniata</taxon>
        <taxon>Vertebrata</taxon>
        <taxon>Euteleostomi</taxon>
        <taxon>Lepidosauria</taxon>
        <taxon>Squamata</taxon>
        <taxon>Bifurcata</taxon>
        <taxon>Unidentata</taxon>
        <taxon>Episquamata</taxon>
        <taxon>Toxicofera</taxon>
        <taxon>Serpentes</taxon>
        <taxon>Colubroidea</taxon>
        <taxon>Elapidae</taxon>
        <taxon>Hydrophiinae</taxon>
        <taxon>Oxyuranus</taxon>
    </lineage>
</organism>
<feature type="signal peptide" evidence="1">
    <location>
        <begin position="1"/>
        <end position="19"/>
    </location>
</feature>
<feature type="propeptide" id="PRO_0000380667" evidence="1">
    <location>
        <begin position="20"/>
        <end position="28"/>
    </location>
</feature>
<feature type="chain" id="PRO_5000140333" description="Cysteine-rich venom protein pseudechetoxin-like">
    <location>
        <begin position="29"/>
        <end position="238"/>
    </location>
</feature>
<feature type="domain" description="SCP">
    <location>
        <begin position="38"/>
        <end position="164"/>
    </location>
</feature>
<feature type="domain" description="ShKT" evidence="2">
    <location>
        <begin position="200"/>
        <end position="233"/>
    </location>
</feature>
<feature type="disulfide bond" evidence="2">
    <location>
        <begin position="75"/>
        <end position="153"/>
    </location>
</feature>
<feature type="disulfide bond" evidence="2">
    <location>
        <begin position="92"/>
        <end position="165"/>
    </location>
</feature>
<feature type="disulfide bond" evidence="2">
    <location>
        <begin position="148"/>
        <end position="162"/>
    </location>
</feature>
<feature type="disulfide bond" evidence="2">
    <location>
        <begin position="184"/>
        <end position="191"/>
    </location>
</feature>
<feature type="disulfide bond" evidence="2">
    <location>
        <begin position="187"/>
        <end position="196"/>
    </location>
</feature>
<feature type="disulfide bond" evidence="2">
    <location>
        <begin position="200"/>
        <end position="233"/>
    </location>
</feature>
<feature type="disulfide bond" evidence="2">
    <location>
        <begin position="209"/>
        <end position="227"/>
    </location>
</feature>
<feature type="disulfide bond" evidence="2">
    <location>
        <begin position="218"/>
        <end position="231"/>
    </location>
</feature>
<feature type="sequence conflict" description="In Ref. 2; AAZ75602." evidence="3" ref="2">
    <original>DDL</original>
    <variation>NDF</variation>
    <location>
        <begin position="204"/>
        <end position="206"/>
    </location>
</feature>
<feature type="sequence conflict" description="In Ref. 2; AAZ75602." evidence="3" ref="2">
    <original>P</original>
    <variation>A</variation>
    <location>
        <position position="211"/>
    </location>
</feature>
<evidence type="ECO:0000250" key="1"/>
<evidence type="ECO:0000255" key="2">
    <source>
        <dbReference type="PROSITE-ProRule" id="PRU01005"/>
    </source>
</evidence>
<evidence type="ECO:0000305" key="3"/>